<organism>
    <name type="scientific">Geobacter sulfurreducens (strain ATCC 51573 / DSM 12127 / PCA)</name>
    <dbReference type="NCBI Taxonomy" id="243231"/>
    <lineage>
        <taxon>Bacteria</taxon>
        <taxon>Pseudomonadati</taxon>
        <taxon>Thermodesulfobacteriota</taxon>
        <taxon>Desulfuromonadia</taxon>
        <taxon>Geobacterales</taxon>
        <taxon>Geobacteraceae</taxon>
        <taxon>Geobacter</taxon>
    </lineage>
</organism>
<feature type="chain" id="PRO_0000255184" description="Lipid-A-disaccharide synthase">
    <location>
        <begin position="1"/>
        <end position="384"/>
    </location>
</feature>
<dbReference type="EC" id="2.4.1.182" evidence="1"/>
<dbReference type="EMBL" id="AE017180">
    <property type="protein sequence ID" value="AAR35637.1"/>
    <property type="molecule type" value="Genomic_DNA"/>
</dbReference>
<dbReference type="RefSeq" id="NP_953310.1">
    <property type="nucleotide sequence ID" value="NC_002939.5"/>
</dbReference>
<dbReference type="RefSeq" id="WP_010942901.1">
    <property type="nucleotide sequence ID" value="NC_002939.5"/>
</dbReference>
<dbReference type="SMR" id="Q74AT9"/>
<dbReference type="FunCoup" id="Q74AT9">
    <property type="interactions" value="325"/>
</dbReference>
<dbReference type="STRING" id="243231.GSU2261"/>
<dbReference type="CAZy" id="GT19">
    <property type="family name" value="Glycosyltransferase Family 19"/>
</dbReference>
<dbReference type="EnsemblBacteria" id="AAR35637">
    <property type="protein sequence ID" value="AAR35637"/>
    <property type="gene ID" value="GSU2261"/>
</dbReference>
<dbReference type="KEGG" id="gsu:GSU2261"/>
<dbReference type="PATRIC" id="fig|243231.5.peg.2292"/>
<dbReference type="eggNOG" id="COG0763">
    <property type="taxonomic scope" value="Bacteria"/>
</dbReference>
<dbReference type="HOGENOM" id="CLU_036577_3_1_7"/>
<dbReference type="InParanoid" id="Q74AT9"/>
<dbReference type="OrthoDB" id="9801642at2"/>
<dbReference type="UniPathway" id="UPA00973"/>
<dbReference type="Proteomes" id="UP000000577">
    <property type="component" value="Chromosome"/>
</dbReference>
<dbReference type="GO" id="GO:0016020">
    <property type="term" value="C:membrane"/>
    <property type="evidence" value="ECO:0007669"/>
    <property type="project" value="GOC"/>
</dbReference>
<dbReference type="GO" id="GO:0008915">
    <property type="term" value="F:lipid-A-disaccharide synthase activity"/>
    <property type="evidence" value="ECO:0007669"/>
    <property type="project" value="UniProtKB-UniRule"/>
</dbReference>
<dbReference type="GO" id="GO:0005543">
    <property type="term" value="F:phospholipid binding"/>
    <property type="evidence" value="ECO:0000318"/>
    <property type="project" value="GO_Central"/>
</dbReference>
<dbReference type="GO" id="GO:0009245">
    <property type="term" value="P:lipid A biosynthetic process"/>
    <property type="evidence" value="ECO:0000318"/>
    <property type="project" value="GO_Central"/>
</dbReference>
<dbReference type="Gene3D" id="3.40.50.2000">
    <property type="entry name" value="Glycogen Phosphorylase B"/>
    <property type="match status" value="2"/>
</dbReference>
<dbReference type="HAMAP" id="MF_00392">
    <property type="entry name" value="LpxB"/>
    <property type="match status" value="1"/>
</dbReference>
<dbReference type="InterPro" id="IPR003835">
    <property type="entry name" value="Glyco_trans_19"/>
</dbReference>
<dbReference type="NCBIfam" id="TIGR00215">
    <property type="entry name" value="lpxB"/>
    <property type="match status" value="1"/>
</dbReference>
<dbReference type="PANTHER" id="PTHR30372">
    <property type="entry name" value="LIPID-A-DISACCHARIDE SYNTHASE"/>
    <property type="match status" value="1"/>
</dbReference>
<dbReference type="PANTHER" id="PTHR30372:SF4">
    <property type="entry name" value="LIPID-A-DISACCHARIDE SYNTHASE, MITOCHONDRIAL-RELATED"/>
    <property type="match status" value="1"/>
</dbReference>
<dbReference type="Pfam" id="PF02684">
    <property type="entry name" value="LpxB"/>
    <property type="match status" value="1"/>
</dbReference>
<dbReference type="SUPFAM" id="SSF53756">
    <property type="entry name" value="UDP-Glycosyltransferase/glycogen phosphorylase"/>
    <property type="match status" value="1"/>
</dbReference>
<gene>
    <name evidence="1" type="primary">lpxB</name>
    <name type="ordered locus">GSU2261</name>
</gene>
<accession>Q74AT9</accession>
<evidence type="ECO:0000255" key="1">
    <source>
        <dbReference type="HAMAP-Rule" id="MF_00392"/>
    </source>
</evidence>
<name>LPXB_GEOSL</name>
<protein>
    <recommendedName>
        <fullName evidence="1">Lipid-A-disaccharide synthase</fullName>
        <ecNumber evidence="1">2.4.1.182</ecNumber>
    </recommendedName>
</protein>
<sequence length="384" mass="41842">MTENTSHRIMIVAGEASGDLHGAGLVREALRLDPTLSFFGIGGPRMREAGVETLVDSSEMAVVGIVEVLAHIGVISRAFMTLRQVIVSNPPDLLILIDYPDFNMLLARVARRHGVKVLYYISPQVWAWRTGRVKTIGRLVDRMAVVFPFEVPFYERAGVPVSFVGHPLADRVRPTMGRDEALASFGLDPGRRVVGLFPGSRRGEIAKLFPVILESAQQLRERYPDIQFILPLASSLTDGDIAPLLAASGLDVTVTQDRVYDVMQVCDAIITVSGTVTLEIALMGVPMVIIYKVSPLTYQVGKRLIRVDHIGICNIVAGERVVPELIQDDASADRIAAEIGRYLDDPAYAEKTRAGLAMVKEKLGTGGCSERVAGIVLEMLGKQV</sequence>
<reference key="1">
    <citation type="journal article" date="2003" name="Science">
        <title>Genome of Geobacter sulfurreducens: metal reduction in subsurface environments.</title>
        <authorList>
            <person name="Methe B.A."/>
            <person name="Nelson K.E."/>
            <person name="Eisen J.A."/>
            <person name="Paulsen I.T."/>
            <person name="Nelson W.C."/>
            <person name="Heidelberg J.F."/>
            <person name="Wu D."/>
            <person name="Wu M."/>
            <person name="Ward N.L."/>
            <person name="Beanan M.J."/>
            <person name="Dodson R.J."/>
            <person name="Madupu R."/>
            <person name="Brinkac L.M."/>
            <person name="Daugherty S.C."/>
            <person name="DeBoy R.T."/>
            <person name="Durkin A.S."/>
            <person name="Gwinn M.L."/>
            <person name="Kolonay J.F."/>
            <person name="Sullivan S.A."/>
            <person name="Haft D.H."/>
            <person name="Selengut J."/>
            <person name="Davidsen T.M."/>
            <person name="Zafar N."/>
            <person name="White O."/>
            <person name="Tran B."/>
            <person name="Romero C."/>
            <person name="Forberger H.A."/>
            <person name="Weidman J.F."/>
            <person name="Khouri H.M."/>
            <person name="Feldblyum T.V."/>
            <person name="Utterback T.R."/>
            <person name="Van Aken S.E."/>
            <person name="Lovley D.R."/>
            <person name="Fraser C.M."/>
        </authorList>
    </citation>
    <scope>NUCLEOTIDE SEQUENCE [LARGE SCALE GENOMIC DNA]</scope>
    <source>
        <strain>ATCC 51573 / DSM 12127 / PCA</strain>
    </source>
</reference>
<keyword id="KW-0328">Glycosyltransferase</keyword>
<keyword id="KW-0441">Lipid A biosynthesis</keyword>
<keyword id="KW-0444">Lipid biosynthesis</keyword>
<keyword id="KW-0443">Lipid metabolism</keyword>
<keyword id="KW-1185">Reference proteome</keyword>
<keyword id="KW-0808">Transferase</keyword>
<comment type="function">
    <text evidence="1">Condensation of UDP-2,3-diacylglucosamine and 2,3-diacylglucosamine-1-phosphate to form lipid A disaccharide, a precursor of lipid A, a phosphorylated glycolipid that anchors the lipopolysaccharide to the outer membrane of the cell.</text>
</comment>
<comment type="catalytic activity">
    <reaction evidence="1">
        <text>a lipid X + a UDP-2-N,3-O-bis[(3R)-3-hydroxyacyl]-alpha-D-glucosamine = a lipid A disaccharide + UDP + H(+)</text>
        <dbReference type="Rhea" id="RHEA:67828"/>
        <dbReference type="ChEBI" id="CHEBI:15378"/>
        <dbReference type="ChEBI" id="CHEBI:58223"/>
        <dbReference type="ChEBI" id="CHEBI:137748"/>
        <dbReference type="ChEBI" id="CHEBI:176338"/>
        <dbReference type="ChEBI" id="CHEBI:176343"/>
        <dbReference type="EC" id="2.4.1.182"/>
    </reaction>
</comment>
<comment type="pathway">
    <text evidence="1">Bacterial outer membrane biogenesis; LPS lipid A biosynthesis.</text>
</comment>
<comment type="similarity">
    <text evidence="1">Belongs to the LpxB family.</text>
</comment>
<proteinExistence type="inferred from homology"/>